<evidence type="ECO:0000255" key="1">
    <source>
        <dbReference type="HAMAP-Rule" id="MF_00700"/>
    </source>
</evidence>
<evidence type="ECO:0000269" key="2">
    <source>
    </source>
</evidence>
<comment type="function">
    <text evidence="1 2">Catalytic subunit of DNA primase, an RNA polymerase that catalyzes the synthesis of short RNA molecules used as primers for DNA polymerase during DNA replication. The small subunit contains the primase catalytic core and has DNA synthesis activity on its own. Binding to the large subunit stabilizes and modulates the activity, increasing the rate of DNA synthesis while decreasing the length of the DNA fragments, and conferring RNA synthesis capability. The DNA polymerase activity may enable DNA primase to also catalyze primer extension after primer synthesis. May also play a role in DNA repair.</text>
</comment>
<comment type="cofactor">
    <cofactor evidence="1">
        <name>Mg(2+)</name>
        <dbReference type="ChEBI" id="CHEBI:18420"/>
    </cofactor>
    <cofactor evidence="1">
        <name>Mn(2+)</name>
        <dbReference type="ChEBI" id="CHEBI:29035"/>
    </cofactor>
</comment>
<comment type="subunit">
    <text evidence="1 2">Heterodimer of a small subunit (PriS) and a large subunit (PriL).</text>
</comment>
<comment type="similarity">
    <text evidence="1">Belongs to the eukaryotic-type primase small subunit family.</text>
</comment>
<sequence length="346" mass="40297">MSKLLREVTPEERRLYYSGEWDAKKLPEFIVESIERREFGFDHTGEGPSDRKNAFSDVRDLEDYIRATAPYAAYSSVAFYRNPQEMEGWLGAELVFDIDAKDLPLRRCQNEHPSGQVCPICLEDAKELARDTLIILKEDFGFENIHVVYSGRGYHIRVIDEWALKLDSKARERILSYVSAAEEVTFDDIQKRYIMLSSGYFRVFRLRFGYFIQRINENHLKNIGLKRSTAEKLLDEKTRQDIVEKFVNKGLLAAFPEGVGYRTLLRLFGLSTTFSKAYFDGRVTVDLKRILRLPSTLHSKVGLVATYIGSDEKRLEKFDPFKDAVPEFRKEEVQKAYQEWKELHEG</sequence>
<reference key="1">
    <citation type="journal article" date="2005" name="Genome Res.">
        <title>Complete genome sequence of the hyperthermophilic archaeon Thermococcus kodakaraensis KOD1 and comparison with Pyrococcus genomes.</title>
        <authorList>
            <person name="Fukui T."/>
            <person name="Atomi H."/>
            <person name="Kanai T."/>
            <person name="Matsumi R."/>
            <person name="Fujiwara S."/>
            <person name="Imanaka T."/>
        </authorList>
    </citation>
    <scope>NUCLEOTIDE SEQUENCE [LARGE SCALE GENOMIC DNA]</scope>
    <source>
        <strain>ATCC BAA-918 / JCM 12380 / KOD1</strain>
    </source>
</reference>
<reference key="2">
    <citation type="journal article" date="2012" name="J. Biol. Chem.">
        <title>Characterization of DNA primase complex isolated from the archaeon, Thermococcus kodakaraensis.</title>
        <authorList>
            <person name="Chemnitz Galal W."/>
            <person name="Pan M."/>
            <person name="Kelman Z."/>
            <person name="Hurwitz J."/>
        </authorList>
    </citation>
    <scope>FUNCTION AS A PRIMASE</scope>
    <scope>SUBUNIT</scope>
</reference>
<dbReference type="EC" id="2.7.7.-" evidence="1"/>
<dbReference type="EMBL" id="AP006878">
    <property type="protein sequence ID" value="BAD85980.1"/>
    <property type="molecule type" value="Genomic_DNA"/>
</dbReference>
<dbReference type="RefSeq" id="WP_011250742.1">
    <property type="nucleotide sequence ID" value="NC_006624.1"/>
</dbReference>
<dbReference type="SMR" id="Q5JJ72"/>
<dbReference type="FunCoup" id="Q5JJ72">
    <property type="interactions" value="14"/>
</dbReference>
<dbReference type="STRING" id="69014.TK1791"/>
<dbReference type="EnsemblBacteria" id="BAD85980">
    <property type="protein sequence ID" value="BAD85980"/>
    <property type="gene ID" value="TK1791"/>
</dbReference>
<dbReference type="GeneID" id="78448321"/>
<dbReference type="KEGG" id="tko:TK1791"/>
<dbReference type="PATRIC" id="fig|69014.16.peg.1747"/>
<dbReference type="eggNOG" id="arCOG04110">
    <property type="taxonomic scope" value="Archaea"/>
</dbReference>
<dbReference type="HOGENOM" id="CLU_056123_1_0_2"/>
<dbReference type="InParanoid" id="Q5JJ72"/>
<dbReference type="OrthoDB" id="31125at2157"/>
<dbReference type="PhylomeDB" id="Q5JJ72"/>
<dbReference type="BRENDA" id="2.7.7.B16">
    <property type="organism ID" value="5246"/>
</dbReference>
<dbReference type="Proteomes" id="UP000000536">
    <property type="component" value="Chromosome"/>
</dbReference>
<dbReference type="GO" id="GO:0000428">
    <property type="term" value="C:DNA-directed RNA polymerase complex"/>
    <property type="evidence" value="ECO:0007669"/>
    <property type="project" value="UniProtKB-KW"/>
</dbReference>
<dbReference type="GO" id="GO:1990077">
    <property type="term" value="C:primosome complex"/>
    <property type="evidence" value="ECO:0007669"/>
    <property type="project" value="UniProtKB-KW"/>
</dbReference>
<dbReference type="GO" id="GO:0003899">
    <property type="term" value="F:DNA-directed RNA polymerase activity"/>
    <property type="evidence" value="ECO:0007669"/>
    <property type="project" value="InterPro"/>
</dbReference>
<dbReference type="GO" id="GO:0046872">
    <property type="term" value="F:metal ion binding"/>
    <property type="evidence" value="ECO:0007669"/>
    <property type="project" value="UniProtKB-KW"/>
</dbReference>
<dbReference type="GO" id="GO:0006269">
    <property type="term" value="P:DNA replication, synthesis of primer"/>
    <property type="evidence" value="ECO:0000318"/>
    <property type="project" value="GO_Central"/>
</dbReference>
<dbReference type="CDD" id="cd04860">
    <property type="entry name" value="AE_Prim_S"/>
    <property type="match status" value="1"/>
</dbReference>
<dbReference type="Gene3D" id="1.10.8.160">
    <property type="entry name" value="DNA primase S, domain 2"/>
    <property type="match status" value="1"/>
</dbReference>
<dbReference type="Gene3D" id="3.90.920.10">
    <property type="entry name" value="DNA primase, PRIM domain"/>
    <property type="match status" value="1"/>
</dbReference>
<dbReference type="HAMAP" id="MF_00700">
    <property type="entry name" value="DNA_primase_sml_arc"/>
    <property type="match status" value="1"/>
</dbReference>
<dbReference type="InterPro" id="IPR002755">
    <property type="entry name" value="DNA_primase_S"/>
</dbReference>
<dbReference type="InterPro" id="IPR014052">
    <property type="entry name" value="DNA_primase_ssu_euk/arc"/>
</dbReference>
<dbReference type="InterPro" id="IPR023639">
    <property type="entry name" value="DNA_primase_ssu_PriS"/>
</dbReference>
<dbReference type="NCBIfam" id="TIGR00335">
    <property type="entry name" value="primase_sml"/>
    <property type="match status" value="1"/>
</dbReference>
<dbReference type="PANTHER" id="PTHR10536">
    <property type="entry name" value="DNA PRIMASE SMALL SUBUNIT"/>
    <property type="match status" value="1"/>
</dbReference>
<dbReference type="Pfam" id="PF01896">
    <property type="entry name" value="DNA_primase_S"/>
    <property type="match status" value="1"/>
</dbReference>
<dbReference type="SUPFAM" id="SSF56747">
    <property type="entry name" value="Prim-pol domain"/>
    <property type="match status" value="1"/>
</dbReference>
<accession>Q5JJ72</accession>
<protein>
    <recommendedName>
        <fullName evidence="1">DNA primase small subunit PriS</fullName>
        <ecNumber evidence="1">2.7.7.-</ecNumber>
    </recommendedName>
</protein>
<proteinExistence type="evidence at protein level"/>
<name>PRIS_THEKO</name>
<keyword id="KW-0235">DNA replication</keyword>
<keyword id="KW-0240">DNA-directed RNA polymerase</keyword>
<keyword id="KW-0460">Magnesium</keyword>
<keyword id="KW-0464">Manganese</keyword>
<keyword id="KW-0479">Metal-binding</keyword>
<keyword id="KW-0548">Nucleotidyltransferase</keyword>
<keyword id="KW-0639">Primosome</keyword>
<keyword id="KW-1185">Reference proteome</keyword>
<keyword id="KW-0804">Transcription</keyword>
<keyword id="KW-0808">Transferase</keyword>
<feature type="chain" id="PRO_0000046752" description="DNA primase small subunit PriS">
    <location>
        <begin position="1"/>
        <end position="346"/>
    </location>
</feature>
<feature type="active site" evidence="1">
    <location>
        <position position="97"/>
    </location>
</feature>
<feature type="active site" evidence="1">
    <location>
        <position position="99"/>
    </location>
</feature>
<feature type="active site" evidence="1">
    <location>
        <position position="280"/>
    </location>
</feature>
<organism>
    <name type="scientific">Thermococcus kodakarensis (strain ATCC BAA-918 / JCM 12380 / KOD1)</name>
    <name type="common">Pyrococcus kodakaraensis (strain KOD1)</name>
    <dbReference type="NCBI Taxonomy" id="69014"/>
    <lineage>
        <taxon>Archaea</taxon>
        <taxon>Methanobacteriati</taxon>
        <taxon>Methanobacteriota</taxon>
        <taxon>Thermococci</taxon>
        <taxon>Thermococcales</taxon>
        <taxon>Thermococcaceae</taxon>
        <taxon>Thermococcus</taxon>
    </lineage>
</organism>
<gene>
    <name evidence="1" type="primary">priS</name>
    <name type="synonym">priA</name>
    <name type="ordered locus">TK1791</name>
</gene>